<gene>
    <name type="ORF">AAEL013527</name>
</gene>
<comment type="function">
    <text evidence="1">Component of the spliceosomal U1 snRNP, which is essential for recognition of the pre-mRNA 5' splice-site and the subsequent assembly of the spliceosome. U1-C is directly involved in initial 5' splice-site recognition for both constitutive and regulated alternative splicing. The interaction with the 5' splice-site seems to precede base-pairing between the pre-mRNA and the U1 snRNA. Stimulates commitment or early (E) complex formation by stabilizing the base pairing of the 5' end of the U1 snRNA and the 5' splice-site region.</text>
</comment>
<comment type="subunit">
    <text evidence="1">U1 snRNP is composed of the 7 core Sm proteins B/B', D1, D2, D3, E, F and G that assemble in a heptameric protein ring on the Sm site of the small nuclear RNA to form the core snRNP, and at least 3 U1 snRNP-specific proteins U1-70K, U1-A and U1-C. U1-C interacts with U1 snRNA and the 5' splice-site region of the pre-mRNA.</text>
</comment>
<comment type="subcellular location">
    <subcellularLocation>
        <location evidence="1">Nucleus</location>
    </subcellularLocation>
</comment>
<comment type="alternative products">
    <event type="alternative splicing"/>
    <isoform>
        <id>Q16IW3-1</id>
        <name>A</name>
        <sequence type="displayed"/>
    </isoform>
    <isoform>
        <id>Q16IW3-2</id>
        <name>B</name>
        <sequence type="described" ref="VSP_042077"/>
    </isoform>
</comment>
<comment type="similarity">
    <text evidence="1">Belongs to the U1 small nuclear ribonucleoprotein C family.</text>
</comment>
<name>RU1C_AEDAE</name>
<protein>
    <recommendedName>
        <fullName evidence="1">U1 small nuclear ribonucleoprotein C</fullName>
        <shortName evidence="1">U1 snRNP C</shortName>
        <shortName evidence="1">U1-C</shortName>
        <shortName evidence="1">U1C</shortName>
    </recommendedName>
</protein>
<reference key="1">
    <citation type="journal article" date="2007" name="Science">
        <title>Genome sequence of Aedes aegypti, a major arbovirus vector.</title>
        <authorList>
            <person name="Nene V."/>
            <person name="Wortman J.R."/>
            <person name="Lawson D."/>
            <person name="Haas B.J."/>
            <person name="Kodira C.D."/>
            <person name="Tu Z.J."/>
            <person name="Loftus B.J."/>
            <person name="Xi Z."/>
            <person name="Megy K."/>
            <person name="Grabherr M."/>
            <person name="Ren Q."/>
            <person name="Zdobnov E.M."/>
            <person name="Lobo N.F."/>
            <person name="Campbell K.S."/>
            <person name="Brown S.E."/>
            <person name="Bonaldo M.F."/>
            <person name="Zhu J."/>
            <person name="Sinkins S.P."/>
            <person name="Hogenkamp D.G."/>
            <person name="Amedeo P."/>
            <person name="Arensburger P."/>
            <person name="Atkinson P.W."/>
            <person name="Bidwell S.L."/>
            <person name="Biedler J."/>
            <person name="Birney E."/>
            <person name="Bruggner R.V."/>
            <person name="Costas J."/>
            <person name="Coy M.R."/>
            <person name="Crabtree J."/>
            <person name="Crawford M."/>
            <person name="DeBruyn B."/>
            <person name="DeCaprio D."/>
            <person name="Eiglmeier K."/>
            <person name="Eisenstadt E."/>
            <person name="El-Dorry H."/>
            <person name="Gelbart W.M."/>
            <person name="Gomes S.L."/>
            <person name="Hammond M."/>
            <person name="Hannick L.I."/>
            <person name="Hogan J.R."/>
            <person name="Holmes M.H."/>
            <person name="Jaffe D."/>
            <person name="Johnston S.J."/>
            <person name="Kennedy R.C."/>
            <person name="Koo H."/>
            <person name="Kravitz S."/>
            <person name="Kriventseva E.V."/>
            <person name="Kulp D."/>
            <person name="Labutti K."/>
            <person name="Lee E."/>
            <person name="Li S."/>
            <person name="Lovin D.D."/>
            <person name="Mao C."/>
            <person name="Mauceli E."/>
            <person name="Menck C.F."/>
            <person name="Miller J.R."/>
            <person name="Montgomery P."/>
            <person name="Mori A."/>
            <person name="Nascimento A.L."/>
            <person name="Naveira H.F."/>
            <person name="Nusbaum C."/>
            <person name="O'Leary S.B."/>
            <person name="Orvis J."/>
            <person name="Pertea M."/>
            <person name="Quesneville H."/>
            <person name="Reidenbach K.R."/>
            <person name="Rogers Y.-H.C."/>
            <person name="Roth C.W."/>
            <person name="Schneider J.R."/>
            <person name="Schatz M."/>
            <person name="Shumway M."/>
            <person name="Stanke M."/>
            <person name="Stinson E.O."/>
            <person name="Tubio J.M.C."/>
            <person name="Vanzee J.P."/>
            <person name="Verjovski-Almeida S."/>
            <person name="Werner D."/>
            <person name="White O.R."/>
            <person name="Wyder S."/>
            <person name="Zeng Q."/>
            <person name="Zhao Q."/>
            <person name="Zhao Y."/>
            <person name="Hill C.A."/>
            <person name="Raikhel A.S."/>
            <person name="Soares M.B."/>
            <person name="Knudson D.L."/>
            <person name="Lee N.H."/>
            <person name="Galagan J."/>
            <person name="Salzberg S.L."/>
            <person name="Paulsen I.T."/>
            <person name="Dimopoulos G."/>
            <person name="Collins F.H."/>
            <person name="Bruce B."/>
            <person name="Fraser-Liggett C.M."/>
            <person name="Severson D.W."/>
        </authorList>
    </citation>
    <scope>NUCLEOTIDE SEQUENCE [LARGE SCALE GENOMIC DNA]</scope>
    <source>
        <strain>LVPib12</strain>
    </source>
</reference>
<dbReference type="EMBL" id="CH478048">
    <property type="protein sequence ID" value="EAT34214.1"/>
    <property type="molecule type" value="Genomic_DNA"/>
</dbReference>
<dbReference type="EMBL" id="CH478048">
    <property type="protein sequence ID" value="EAT34215.1"/>
    <property type="molecule type" value="Genomic_DNA"/>
</dbReference>
<dbReference type="RefSeq" id="XP_001663716.1">
    <property type="nucleotide sequence ID" value="XM_001663666.1"/>
</dbReference>
<dbReference type="RefSeq" id="XP_001663717.1">
    <molecule id="Q16IW3-1"/>
    <property type="nucleotide sequence ID" value="XM_001663667.1"/>
</dbReference>
<dbReference type="FunCoup" id="Q16IW3">
    <property type="interactions" value="808"/>
</dbReference>
<dbReference type="STRING" id="7159.Q16IW3"/>
<dbReference type="PaxDb" id="7159-AAEL013527-PA"/>
<dbReference type="EnsemblMetazoa" id="AAEL013527-RA">
    <molecule id="Q16IW3-1"/>
    <property type="protein sequence ID" value="AAEL013527-PA"/>
    <property type="gene ID" value="AAEL013527"/>
</dbReference>
<dbReference type="GeneID" id="5578146"/>
<dbReference type="KEGG" id="aag:5578146"/>
<dbReference type="CTD" id="42274"/>
<dbReference type="VEuPathDB" id="VectorBase:AAEL013527"/>
<dbReference type="eggNOG" id="KOG3454">
    <property type="taxonomic scope" value="Eukaryota"/>
</dbReference>
<dbReference type="InParanoid" id="Q16IW3"/>
<dbReference type="OMA" id="GCELFLA"/>
<dbReference type="OrthoDB" id="76567at2759"/>
<dbReference type="PhylomeDB" id="Q16IW3"/>
<dbReference type="Proteomes" id="UP000008820">
    <property type="component" value="Chromosome 1"/>
</dbReference>
<dbReference type="Proteomes" id="UP000682892">
    <property type="component" value="Unassembled WGS sequence"/>
</dbReference>
<dbReference type="GO" id="GO:0000243">
    <property type="term" value="C:commitment complex"/>
    <property type="evidence" value="ECO:0007669"/>
    <property type="project" value="UniProtKB-UniRule"/>
</dbReference>
<dbReference type="GO" id="GO:0005685">
    <property type="term" value="C:U1 snRNP"/>
    <property type="evidence" value="ECO:0007669"/>
    <property type="project" value="UniProtKB-UniRule"/>
</dbReference>
<dbReference type="GO" id="GO:0071004">
    <property type="term" value="C:U2-type prespliceosome"/>
    <property type="evidence" value="ECO:0007669"/>
    <property type="project" value="UniProtKB-UniRule"/>
</dbReference>
<dbReference type="GO" id="GO:0003729">
    <property type="term" value="F:mRNA binding"/>
    <property type="evidence" value="ECO:0007669"/>
    <property type="project" value="UniProtKB-UniRule"/>
</dbReference>
<dbReference type="GO" id="GO:0030627">
    <property type="term" value="F:pre-mRNA 5'-splice site binding"/>
    <property type="evidence" value="ECO:0007669"/>
    <property type="project" value="InterPro"/>
</dbReference>
<dbReference type="GO" id="GO:0030619">
    <property type="term" value="F:U1 snRNA binding"/>
    <property type="evidence" value="ECO:0007669"/>
    <property type="project" value="UniProtKB-UniRule"/>
</dbReference>
<dbReference type="GO" id="GO:0008270">
    <property type="term" value="F:zinc ion binding"/>
    <property type="evidence" value="ECO:0007669"/>
    <property type="project" value="UniProtKB-UniRule"/>
</dbReference>
<dbReference type="GO" id="GO:0000395">
    <property type="term" value="P:mRNA 5'-splice site recognition"/>
    <property type="evidence" value="ECO:0007669"/>
    <property type="project" value="UniProtKB-UniRule"/>
</dbReference>
<dbReference type="GO" id="GO:0000387">
    <property type="term" value="P:spliceosomal snRNP assembly"/>
    <property type="evidence" value="ECO:0007669"/>
    <property type="project" value="UniProtKB-UniRule"/>
</dbReference>
<dbReference type="FunFam" id="3.30.160.60:FF:000059">
    <property type="entry name" value="U1 small nuclear ribonucleoprotein C"/>
    <property type="match status" value="1"/>
</dbReference>
<dbReference type="Gene3D" id="3.30.160.60">
    <property type="entry name" value="Classic Zinc Finger"/>
    <property type="match status" value="1"/>
</dbReference>
<dbReference type="HAMAP" id="MF_03153">
    <property type="entry name" value="U1_C"/>
    <property type="match status" value="1"/>
</dbReference>
<dbReference type="InterPro" id="IPR000690">
    <property type="entry name" value="Matrin/U1-C_Znf_C2H2"/>
</dbReference>
<dbReference type="InterPro" id="IPR003604">
    <property type="entry name" value="Matrin/U1-like-C_Znf_C2H2"/>
</dbReference>
<dbReference type="InterPro" id="IPR013085">
    <property type="entry name" value="U1-CZ_Znf_C2H2"/>
</dbReference>
<dbReference type="InterPro" id="IPR017340">
    <property type="entry name" value="U1_snRNP-C"/>
</dbReference>
<dbReference type="InterPro" id="IPR036236">
    <property type="entry name" value="Znf_C2H2_sf"/>
</dbReference>
<dbReference type="PANTHER" id="PTHR31148">
    <property type="entry name" value="U1 SMALL NUCLEAR RIBONUCLEOPROTEIN C"/>
    <property type="match status" value="1"/>
</dbReference>
<dbReference type="PANTHER" id="PTHR31148:SF1">
    <property type="entry name" value="U1 SMALL NUCLEAR RIBONUCLEOPROTEIN C"/>
    <property type="match status" value="1"/>
</dbReference>
<dbReference type="Pfam" id="PF06220">
    <property type="entry name" value="zf-U1"/>
    <property type="match status" value="1"/>
</dbReference>
<dbReference type="PIRSF" id="PIRSF037969">
    <property type="entry name" value="U1_snRNP-C"/>
    <property type="match status" value="1"/>
</dbReference>
<dbReference type="SMART" id="SM00451">
    <property type="entry name" value="ZnF_U1"/>
    <property type="match status" value="1"/>
</dbReference>
<dbReference type="SUPFAM" id="SSF57667">
    <property type="entry name" value="beta-beta-alpha zinc fingers"/>
    <property type="match status" value="1"/>
</dbReference>
<dbReference type="PROSITE" id="PS50171">
    <property type="entry name" value="ZF_MATRIN"/>
    <property type="match status" value="1"/>
</dbReference>
<proteinExistence type="inferred from homology"/>
<keyword id="KW-0025">Alternative splicing</keyword>
<keyword id="KW-0479">Metal-binding</keyword>
<keyword id="KW-0539">Nucleus</keyword>
<keyword id="KW-1185">Reference proteome</keyword>
<keyword id="KW-0687">Ribonucleoprotein</keyword>
<keyword id="KW-0694">RNA-binding</keyword>
<keyword id="KW-0862">Zinc</keyword>
<keyword id="KW-0863">Zinc-finger</keyword>
<evidence type="ECO:0000255" key="1">
    <source>
        <dbReference type="HAMAP-Rule" id="MF_03153"/>
    </source>
</evidence>
<evidence type="ECO:0000305" key="2"/>
<organism>
    <name type="scientific">Aedes aegypti</name>
    <name type="common">Yellowfever mosquito</name>
    <name type="synonym">Culex aegypti</name>
    <dbReference type="NCBI Taxonomy" id="7159"/>
    <lineage>
        <taxon>Eukaryota</taxon>
        <taxon>Metazoa</taxon>
        <taxon>Ecdysozoa</taxon>
        <taxon>Arthropoda</taxon>
        <taxon>Hexapoda</taxon>
        <taxon>Insecta</taxon>
        <taxon>Pterygota</taxon>
        <taxon>Neoptera</taxon>
        <taxon>Endopterygota</taxon>
        <taxon>Diptera</taxon>
        <taxon>Nematocera</taxon>
        <taxon>Culicoidea</taxon>
        <taxon>Culicidae</taxon>
        <taxon>Culicinae</taxon>
        <taxon>Aedini</taxon>
        <taxon>Aedes</taxon>
        <taxon>Stegomyia</taxon>
    </lineage>
</organism>
<sequence length="154" mass="17201">MPKYYCDYCDTYLTHDSPSVRKTHCTGRKHKDNVKFYYQKWMEEQAQHLIDATTAAFKAGKIAQNPFSAGPPKPNVAIPPPSMGMPARPGMIPGMPAGAPPLLMGPGPMGMRPPMMMPMGMPPMGMGMRPPMMNGPPPQMNQKVYHNTDRRYHR</sequence>
<feature type="chain" id="PRO_0000414258" description="U1 small nuclear ribonucleoprotein C">
    <location>
        <begin position="1"/>
        <end position="154"/>
    </location>
</feature>
<feature type="zinc finger region" description="Matrin-type" evidence="1">
    <location>
        <begin position="4"/>
        <end position="36"/>
    </location>
</feature>
<feature type="splice variant" id="VSP_042077" description="In isoform B." evidence="2">
    <location>
        <begin position="145"/>
        <end position="154"/>
    </location>
</feature>
<accession>Q16IW3</accession>
<accession>Q16IW2</accession>